<proteinExistence type="inferred from homology"/>
<name>PSBA_AMAHY</name>
<accession>P02956</accession>
<geneLocation type="chloroplast"/>
<protein>
    <recommendedName>
        <fullName evidence="1">Photosystem II protein D1</fullName>
        <shortName evidence="1">PSII D1 protein</shortName>
        <ecNumber evidence="1">1.10.3.9</ecNumber>
    </recommendedName>
    <alternativeName>
        <fullName evidence="1">Photosystem II Q(B) protein</fullName>
    </alternativeName>
</protein>
<reference key="1">
    <citation type="journal article" date="1983" name="Science">
        <title>Molecular basis of herbicide resistance in Amaranthus hybridus.</title>
        <authorList>
            <person name="Hirschberg J."/>
            <person name="McIntosh L."/>
        </authorList>
    </citation>
    <scope>NUCLEOTIDE SEQUENCE [GENOMIC DNA]</scope>
    <scope>VARIANT GLY-264</scope>
</reference>
<keyword id="KW-0007">Acetylation</keyword>
<keyword id="KW-0106">Calcium</keyword>
<keyword id="KW-0148">Chlorophyll</keyword>
<keyword id="KW-0150">Chloroplast</keyword>
<keyword id="KW-0157">Chromophore</keyword>
<keyword id="KW-0249">Electron transport</keyword>
<keyword id="KW-0359">Herbicide resistance</keyword>
<keyword id="KW-0408">Iron</keyword>
<keyword id="KW-0460">Magnesium</keyword>
<keyword id="KW-0464">Manganese</keyword>
<keyword id="KW-0472">Membrane</keyword>
<keyword id="KW-0479">Metal-binding</keyword>
<keyword id="KW-0560">Oxidoreductase</keyword>
<keyword id="KW-0597">Phosphoprotein</keyword>
<keyword id="KW-0602">Photosynthesis</keyword>
<keyword id="KW-0604">Photosystem II</keyword>
<keyword id="KW-0934">Plastid</keyword>
<keyword id="KW-0793">Thylakoid</keyword>
<keyword id="KW-0812">Transmembrane</keyword>
<keyword id="KW-1133">Transmembrane helix</keyword>
<keyword id="KW-0813">Transport</keyword>
<dbReference type="EC" id="1.10.3.9" evidence="1"/>
<dbReference type="EMBL" id="K01200">
    <property type="protein sequence ID" value="AAA84445.1"/>
    <property type="status" value="ALT_INIT"/>
    <property type="molecule type" value="Genomic_DNA"/>
</dbReference>
<dbReference type="PIR" id="A37572">
    <property type="entry name" value="FMMH32"/>
</dbReference>
<dbReference type="RefSeq" id="YP_010028489.1">
    <property type="nucleotide sequence ID" value="NC_053787.1"/>
</dbReference>
<dbReference type="SMR" id="P02956"/>
<dbReference type="GeneID" id="63371256"/>
<dbReference type="GO" id="GO:0009535">
    <property type="term" value="C:chloroplast thylakoid membrane"/>
    <property type="evidence" value="ECO:0007669"/>
    <property type="project" value="UniProtKB-SubCell"/>
</dbReference>
<dbReference type="GO" id="GO:0009523">
    <property type="term" value="C:photosystem II"/>
    <property type="evidence" value="ECO:0007669"/>
    <property type="project" value="UniProtKB-KW"/>
</dbReference>
<dbReference type="GO" id="GO:0016168">
    <property type="term" value="F:chlorophyll binding"/>
    <property type="evidence" value="ECO:0007669"/>
    <property type="project" value="UniProtKB-UniRule"/>
</dbReference>
<dbReference type="GO" id="GO:0045156">
    <property type="term" value="F:electron transporter, transferring electrons within the cyclic electron transport pathway of photosynthesis activity"/>
    <property type="evidence" value="ECO:0007669"/>
    <property type="project" value="InterPro"/>
</dbReference>
<dbReference type="GO" id="GO:0005506">
    <property type="term" value="F:iron ion binding"/>
    <property type="evidence" value="ECO:0007669"/>
    <property type="project" value="UniProtKB-UniRule"/>
</dbReference>
<dbReference type="GO" id="GO:0016682">
    <property type="term" value="F:oxidoreductase activity, acting on diphenols and related substances as donors, oxygen as acceptor"/>
    <property type="evidence" value="ECO:0007669"/>
    <property type="project" value="UniProtKB-UniRule"/>
</dbReference>
<dbReference type="GO" id="GO:0010242">
    <property type="term" value="F:oxygen evolving activity"/>
    <property type="evidence" value="ECO:0007669"/>
    <property type="project" value="UniProtKB-EC"/>
</dbReference>
<dbReference type="GO" id="GO:0009772">
    <property type="term" value="P:photosynthetic electron transport in photosystem II"/>
    <property type="evidence" value="ECO:0007669"/>
    <property type="project" value="InterPro"/>
</dbReference>
<dbReference type="GO" id="GO:0009635">
    <property type="term" value="P:response to herbicide"/>
    <property type="evidence" value="ECO:0007669"/>
    <property type="project" value="UniProtKB-KW"/>
</dbReference>
<dbReference type="CDD" id="cd09289">
    <property type="entry name" value="Photosystem-II_D1"/>
    <property type="match status" value="1"/>
</dbReference>
<dbReference type="FunFam" id="1.20.85.10:FF:000002">
    <property type="entry name" value="Photosystem II protein D1"/>
    <property type="match status" value="1"/>
</dbReference>
<dbReference type="Gene3D" id="1.20.85.10">
    <property type="entry name" value="Photosystem II protein D1-like"/>
    <property type="match status" value="1"/>
</dbReference>
<dbReference type="HAMAP" id="MF_01379">
    <property type="entry name" value="PSII_PsbA_D1"/>
    <property type="match status" value="1"/>
</dbReference>
<dbReference type="InterPro" id="IPR055266">
    <property type="entry name" value="D1/D2"/>
</dbReference>
<dbReference type="InterPro" id="IPR036854">
    <property type="entry name" value="Photo_II_D1/D2_sf"/>
</dbReference>
<dbReference type="InterPro" id="IPR000484">
    <property type="entry name" value="Photo_RC_L/M"/>
</dbReference>
<dbReference type="InterPro" id="IPR055265">
    <property type="entry name" value="Photo_RC_L/M_CS"/>
</dbReference>
<dbReference type="InterPro" id="IPR005867">
    <property type="entry name" value="PSII_D1"/>
</dbReference>
<dbReference type="NCBIfam" id="TIGR01151">
    <property type="entry name" value="psbA"/>
    <property type="match status" value="1"/>
</dbReference>
<dbReference type="PANTHER" id="PTHR33149:SF12">
    <property type="entry name" value="PHOTOSYSTEM II D2 PROTEIN"/>
    <property type="match status" value="1"/>
</dbReference>
<dbReference type="PANTHER" id="PTHR33149">
    <property type="entry name" value="PHOTOSYSTEM II PROTEIN D1"/>
    <property type="match status" value="1"/>
</dbReference>
<dbReference type="Pfam" id="PF00124">
    <property type="entry name" value="Photo_RC"/>
    <property type="match status" value="1"/>
</dbReference>
<dbReference type="PRINTS" id="PR00256">
    <property type="entry name" value="REACTNCENTRE"/>
</dbReference>
<dbReference type="SUPFAM" id="SSF81483">
    <property type="entry name" value="Bacterial photosystem II reaction centre, L and M subunits"/>
    <property type="match status" value="1"/>
</dbReference>
<dbReference type="PROSITE" id="PS00244">
    <property type="entry name" value="REACTION_CENTER"/>
    <property type="match status" value="1"/>
</dbReference>
<comment type="function">
    <text evidence="1">Photosystem II (PSII) is a light-driven water:plastoquinone oxidoreductase that uses light energy to abstract electrons from H(2)O, generating O(2) and a proton gradient subsequently used for ATP formation. It consists of a core antenna complex that captures photons, and an electron transfer chain that converts photonic excitation into a charge separation. The D1/D2 (PsbA/PsbD) reaction center heterodimer binds P680, the primary electron donor of PSII as well as several subsequent electron acceptors.</text>
</comment>
<comment type="catalytic activity">
    <reaction evidence="1">
        <text>2 a plastoquinone + 4 hnu + 2 H2O = 2 a plastoquinol + O2</text>
        <dbReference type="Rhea" id="RHEA:36359"/>
        <dbReference type="Rhea" id="RHEA-COMP:9561"/>
        <dbReference type="Rhea" id="RHEA-COMP:9562"/>
        <dbReference type="ChEBI" id="CHEBI:15377"/>
        <dbReference type="ChEBI" id="CHEBI:15379"/>
        <dbReference type="ChEBI" id="CHEBI:17757"/>
        <dbReference type="ChEBI" id="CHEBI:30212"/>
        <dbReference type="ChEBI" id="CHEBI:62192"/>
        <dbReference type="EC" id="1.10.3.9"/>
    </reaction>
</comment>
<comment type="cofactor">
    <text evidence="1">The D1/D2 heterodimer binds P680, chlorophylls that are the primary electron donor of PSII, and subsequent electron acceptors. It shares a non-heme iron and each subunit binds pheophytin, quinone, additional chlorophylls, carotenoids and lipids. D1 provides most of the ligands for the Mn4-Ca-O5 cluster of the oxygen-evolving complex (OEC). There is also a Cl(-1) ion associated with D1 and D2, which is required for oxygen evolution. The PSII complex binds additional chlorophylls, carotenoids and specific lipids.</text>
</comment>
<comment type="subunit">
    <text evidence="1">PSII is composed of 1 copy each of membrane proteins PsbA, PsbB, PsbC, PsbD, PsbE, PsbF, PsbH, PsbI, PsbJ, PsbK, PsbL, PsbM, PsbT, PsbX, PsbY, PsbZ, Psb30/Ycf12, at least 3 peripheral proteins of the oxygen-evolving complex and a large number of cofactors. It forms dimeric complexes.</text>
</comment>
<comment type="subcellular location">
    <subcellularLocation>
        <location evidence="1">Plastid</location>
        <location evidence="1">Chloroplast thylakoid membrane</location>
        <topology evidence="1">Multi-pass membrane protein</topology>
    </subcellularLocation>
</comment>
<comment type="PTM">
    <text evidence="1">Tyr-161 forms a radical intermediate that is referred to as redox-active TyrZ, YZ or Y-Z.</text>
</comment>
<comment type="PTM">
    <text evidence="1">C-terminally processed by CTPA; processing is essential to allow assembly of the oxygen-evolving complex and thus photosynthetic growth.</text>
</comment>
<comment type="miscellaneous">
    <text evidence="1">2 of the reaction center chlorophylls (ChlD1 and ChlD2) are entirely coordinated by water.</text>
</comment>
<comment type="miscellaneous">
    <text evidence="1">Herbicides such as atrazine, BNT, diuron or ioxynil bind in the Q(B) binding site and block subsequent electron transfer.</text>
</comment>
<comment type="similarity">
    <text evidence="1">Belongs to the reaction center PufL/M/PsbA/D family.</text>
</comment>
<comment type="sequence caution" evidence="3">
    <conflict type="erroneous initiation">
        <sequence resource="EMBL-CDS" id="AAA84445"/>
    </conflict>
    <text>Truncated N-terminus.</text>
</comment>
<sequence length="353" mass="38965">MTAILERRESESLWGRFCNWITSTENRLYIGWFGVLMIPTLLTATSVFIIAFIAAPPVDIDGIREPVSGSLLYGNNIISGAIIPTSAAIGLHFYPIWEAASVDEWLYNGGPYELIVLHFLLGVACYMGREWELSFRLGMRPWIAVAYSAPVAAATAVFLIYPIGQGSFSDGMPLGISGTFNFMIVFQAEHNILMHPFHMLGVAGVFGGSLFSAMHGSLVTSSLIRETTENESANEGYRFGQEEETYNIVAAHGYFGRLIFQYASFNNSRSLHFFLAAWPVIGIWFTALGISTMAFNLNGFNFNQSVVDSQGRVINTWADIINRANLGMEVMHERNAHNFPLDLAAIEAPSTNG</sequence>
<gene>
    <name evidence="1" type="primary">psbA</name>
</gene>
<evidence type="ECO:0000255" key="1">
    <source>
        <dbReference type="HAMAP-Rule" id="MF_01379"/>
    </source>
</evidence>
<evidence type="ECO:0000269" key="2">
    <source>
    </source>
</evidence>
<evidence type="ECO:0000305" key="3"/>
<organism>
    <name type="scientific">Amaranthus hybridus</name>
    <name type="common">Slim amaranth</name>
    <dbReference type="NCBI Taxonomy" id="3565"/>
    <lineage>
        <taxon>Eukaryota</taxon>
        <taxon>Viridiplantae</taxon>
        <taxon>Streptophyta</taxon>
        <taxon>Embryophyta</taxon>
        <taxon>Tracheophyta</taxon>
        <taxon>Spermatophyta</taxon>
        <taxon>Magnoliopsida</taxon>
        <taxon>eudicotyledons</taxon>
        <taxon>Gunneridae</taxon>
        <taxon>Pentapetalae</taxon>
        <taxon>Caryophyllales</taxon>
        <taxon>Amaranthaceae</taxon>
        <taxon>Amaranthus</taxon>
    </lineage>
</organism>
<feature type="initiator methionine" description="Removed" evidence="1">
    <location>
        <position position="1"/>
    </location>
</feature>
<feature type="chain" id="PRO_0000090422" description="Photosystem II protein D1" evidence="1">
    <location>
        <begin position="2"/>
        <end position="344"/>
    </location>
</feature>
<feature type="propeptide" id="PRO_0000316435" evidence="1">
    <location>
        <begin position="345"/>
        <end position="353"/>
    </location>
</feature>
<feature type="transmembrane region" description="Helical" evidence="1">
    <location>
        <begin position="29"/>
        <end position="46"/>
    </location>
</feature>
<feature type="transmembrane region" description="Helical" evidence="1">
    <location>
        <begin position="118"/>
        <end position="133"/>
    </location>
</feature>
<feature type="transmembrane region" description="Helical" evidence="1">
    <location>
        <begin position="142"/>
        <end position="156"/>
    </location>
</feature>
<feature type="transmembrane region" description="Helical" evidence="1">
    <location>
        <begin position="197"/>
        <end position="218"/>
    </location>
</feature>
<feature type="transmembrane region" description="Helical" evidence="1">
    <location>
        <begin position="274"/>
        <end position="288"/>
    </location>
</feature>
<feature type="binding site" description="axial binding residue" evidence="1">
    <location>
        <position position="118"/>
    </location>
    <ligand>
        <name>chlorophyll a</name>
        <dbReference type="ChEBI" id="CHEBI:58416"/>
        <label>ChlzD1</label>
    </ligand>
    <ligandPart>
        <name>Mg</name>
        <dbReference type="ChEBI" id="CHEBI:25107"/>
    </ligandPart>
</feature>
<feature type="binding site" evidence="1">
    <location>
        <position position="126"/>
    </location>
    <ligand>
        <name>pheophytin a</name>
        <dbReference type="ChEBI" id="CHEBI:136840"/>
        <label>D1</label>
    </ligand>
</feature>
<feature type="binding site" evidence="1">
    <location>
        <position position="170"/>
    </location>
    <ligand>
        <name>[CaMn4O5] cluster</name>
        <dbReference type="ChEBI" id="CHEBI:189552"/>
    </ligand>
</feature>
<feature type="binding site" evidence="1">
    <location>
        <position position="189"/>
    </location>
    <ligand>
        <name>[CaMn4O5] cluster</name>
        <dbReference type="ChEBI" id="CHEBI:189552"/>
    </ligand>
</feature>
<feature type="binding site" description="axial binding residue" evidence="1">
    <location>
        <position position="198"/>
    </location>
    <ligand>
        <name>chlorophyll a</name>
        <dbReference type="ChEBI" id="CHEBI:58416"/>
        <label>PD1</label>
    </ligand>
    <ligandPart>
        <name>Mg</name>
        <dbReference type="ChEBI" id="CHEBI:25107"/>
    </ligandPart>
</feature>
<feature type="binding site" evidence="1">
    <location>
        <position position="215"/>
    </location>
    <ligand>
        <name>a quinone</name>
        <dbReference type="ChEBI" id="CHEBI:132124"/>
        <label>B</label>
    </ligand>
</feature>
<feature type="binding site" evidence="1">
    <location>
        <position position="215"/>
    </location>
    <ligand>
        <name>Fe cation</name>
        <dbReference type="ChEBI" id="CHEBI:24875"/>
        <note>ligand shared with heterodimeric partner</note>
    </ligand>
</feature>
<feature type="binding site" evidence="1">
    <location>
        <begin position="264"/>
        <end position="265"/>
    </location>
    <ligand>
        <name>a quinone</name>
        <dbReference type="ChEBI" id="CHEBI:132124"/>
        <label>B</label>
    </ligand>
</feature>
<feature type="binding site" evidence="1">
    <location>
        <position position="272"/>
    </location>
    <ligand>
        <name>Fe cation</name>
        <dbReference type="ChEBI" id="CHEBI:24875"/>
        <note>ligand shared with heterodimeric partner</note>
    </ligand>
</feature>
<feature type="binding site" evidence="1">
    <location>
        <position position="332"/>
    </location>
    <ligand>
        <name>[CaMn4O5] cluster</name>
        <dbReference type="ChEBI" id="CHEBI:189552"/>
    </ligand>
</feature>
<feature type="binding site" evidence="1">
    <location>
        <position position="333"/>
    </location>
    <ligand>
        <name>[CaMn4O5] cluster</name>
        <dbReference type="ChEBI" id="CHEBI:189552"/>
    </ligand>
</feature>
<feature type="binding site" evidence="1">
    <location>
        <position position="342"/>
    </location>
    <ligand>
        <name>[CaMn4O5] cluster</name>
        <dbReference type="ChEBI" id="CHEBI:189552"/>
    </ligand>
</feature>
<feature type="binding site" evidence="1">
    <location>
        <position position="344"/>
    </location>
    <ligand>
        <name>[CaMn4O5] cluster</name>
        <dbReference type="ChEBI" id="CHEBI:189552"/>
    </ligand>
</feature>
<feature type="site" description="Tyrosine radical intermediate" evidence="1">
    <location>
        <position position="161"/>
    </location>
</feature>
<feature type="site" description="Stabilizes free radical intermediate" evidence="1">
    <location>
        <position position="190"/>
    </location>
</feature>
<feature type="site" description="Cleavage; by CTPA" evidence="1">
    <location>
        <begin position="344"/>
        <end position="345"/>
    </location>
</feature>
<feature type="modified residue" description="N-acetylthreonine" evidence="1">
    <location>
        <position position="2"/>
    </location>
</feature>
<feature type="modified residue" description="Phosphothreonine" evidence="1">
    <location>
        <position position="2"/>
    </location>
</feature>
<feature type="sequence variant" description="In strain: herbicide resistance." evidence="2">
    <original>S</original>
    <variation>G</variation>
    <location>
        <position position="264"/>
    </location>
</feature>